<evidence type="ECO:0000250" key="1">
    <source>
        <dbReference type="UniProtKB" id="Q12051"/>
    </source>
</evidence>
<evidence type="ECO:0000269" key="2">
    <source>
    </source>
</evidence>
<evidence type="ECO:0000303" key="3">
    <source>
    </source>
</evidence>
<evidence type="ECO:0000303" key="4">
    <source>
    </source>
</evidence>
<evidence type="ECO:0000303" key="5">
    <source>
    </source>
</evidence>
<evidence type="ECO:0000305" key="6"/>
<name>ERG20_YEAST</name>
<gene>
    <name type="primary">ERG20</name>
    <name type="synonym">BOT3</name>
    <name type="synonym">FDS1</name>
    <name type="synonym">FPP1</name>
    <name type="ordered locus">YJL167W</name>
    <name type="ORF">J0525</name>
</gene>
<comment type="function">
    <text evidence="2 4">Farnesyl pyrophosphate synthase; part of the second module of ergosterol biosynthesis pathway that includes the middle steps of the pathway (PubMed:8096487). ERG20 catalyzes the sequential condensation of isopentenyl pyrophosphate with dimethylallyl pyrophosphate, and then with the resultant geranylpyrophosphate to the ultimate product farnesyl pyrophosphate (PubMed:8096487). The second module is carried out in the vacuole and involves the formation of farnesyl diphosphate, which is also an important intermediate in the biosynthesis of ubiquinone, dolichol, heme and prenylated proteins. Activity by the mevalonate kinase ERG12 first converts mevalonate into 5-phosphomevalonate. 5-phosphomevalonate is then further converted to 5-diphosphomevalonate by the phosphomevalonate kinase ERG8. The diphosphomevalonate decarboxylase MVD1/ERG19 then produces isopentenyl diphosphate. The isopentenyl-diphosphate delta-isomerase IDI1 then catalyzes the 1,3-allylic rearrangement of the homoallylic substrate isopentenyl (IPP) to its highly electrophilic allylic isomer, dimethylallyl diphosphate (DMAPP). Finally the farnesyl diphosphate synthase ERG20 catalyzes the sequential condensation of isopentenyl pyrophosphate with dimethylallyl pyrophosphate, and then with the resultant geranylpyrophosphate to the ultimate product farnesyl pyrophosphate (PubMed:32679672).</text>
</comment>
<comment type="catalytic activity">
    <reaction evidence="2">
        <text>isopentenyl diphosphate + dimethylallyl diphosphate = (2E)-geranyl diphosphate + diphosphate</text>
        <dbReference type="Rhea" id="RHEA:22408"/>
        <dbReference type="ChEBI" id="CHEBI:33019"/>
        <dbReference type="ChEBI" id="CHEBI:57623"/>
        <dbReference type="ChEBI" id="CHEBI:58057"/>
        <dbReference type="ChEBI" id="CHEBI:128769"/>
        <dbReference type="EC" id="2.5.1.1"/>
    </reaction>
    <physiologicalReaction direction="left-to-right" evidence="2">
        <dbReference type="Rhea" id="RHEA:22409"/>
    </physiologicalReaction>
</comment>
<comment type="catalytic activity">
    <reaction evidence="2">
        <text>isopentenyl diphosphate + (2E)-geranyl diphosphate = (2E,6E)-farnesyl diphosphate + diphosphate</text>
        <dbReference type="Rhea" id="RHEA:19361"/>
        <dbReference type="ChEBI" id="CHEBI:33019"/>
        <dbReference type="ChEBI" id="CHEBI:58057"/>
        <dbReference type="ChEBI" id="CHEBI:128769"/>
        <dbReference type="ChEBI" id="CHEBI:175763"/>
        <dbReference type="EC" id="2.5.1.10"/>
    </reaction>
    <physiologicalReaction direction="left-to-right" evidence="2">
        <dbReference type="Rhea" id="RHEA:19362"/>
    </physiologicalReaction>
</comment>
<comment type="cofactor">
    <cofactor evidence="1">
        <name>Mg(2+)</name>
        <dbReference type="ChEBI" id="CHEBI:18420"/>
    </cofactor>
    <text evidence="1">Binds 2 Mg(2+) ions per subunit.</text>
</comment>
<comment type="pathway">
    <text evidence="2">Isoprenoid biosynthesis; farnesyl diphosphate biosynthesis; farnesyl diphosphate from geranyl diphosphate and isopentenyl diphosphate: step 1/1.</text>
</comment>
<comment type="pathway">
    <text evidence="2">Isoprenoid biosynthesis; geranyl diphosphate biosynthesis; geranyl diphosphate from dimethylallyl diphosphate and isopentenyl diphosphate: step 1/1.</text>
</comment>
<comment type="similarity">
    <text evidence="6">Belongs to the FPP/GGPP synthase family.</text>
</comment>
<organism>
    <name type="scientific">Saccharomyces cerevisiae (strain ATCC 204508 / S288c)</name>
    <name type="common">Baker's yeast</name>
    <dbReference type="NCBI Taxonomy" id="559292"/>
    <lineage>
        <taxon>Eukaryota</taxon>
        <taxon>Fungi</taxon>
        <taxon>Dikarya</taxon>
        <taxon>Ascomycota</taxon>
        <taxon>Saccharomycotina</taxon>
        <taxon>Saccharomycetes</taxon>
        <taxon>Saccharomycetales</taxon>
        <taxon>Saccharomycetaceae</taxon>
        <taxon>Saccharomyces</taxon>
    </lineage>
</organism>
<protein>
    <recommendedName>
        <fullName evidence="5">Farnesyl pyrophosphate synthase</fullName>
        <shortName evidence="5">FPP synthase</shortName>
        <shortName evidence="5">FPS</shortName>
        <ecNumber evidence="2">2.5.1.10</ecNumber>
    </recommendedName>
    <alternativeName>
        <fullName evidence="3">(2E,6E)-farnesyl diphosphate synthase</fullName>
    </alternativeName>
    <alternativeName>
        <fullName evidence="5">Dimethylallyltranstransferase</fullName>
        <ecNumber evidence="2">2.5.1.1</ecNumber>
    </alternativeName>
    <alternativeName>
        <fullName evidence="5">Farnesyl diphosphate synthase</fullName>
    </alternativeName>
    <alternativeName>
        <fullName evidence="5">Geranyltranstransferase</fullName>
    </alternativeName>
</protein>
<reference key="1">
    <citation type="journal article" date="1989" name="J. Biol. Chem.">
        <title>Farnesyl diphosphate synthetase. Molecular cloning, sequence, and expression of an essential gene from Saccharomyces cerevisiae.</title>
        <authorList>
            <person name="Anderson M.S."/>
            <person name="Yarger J.G."/>
            <person name="Burck C.L."/>
            <person name="Poulter C.D."/>
        </authorList>
    </citation>
    <scope>NUCLEOTIDE SEQUENCE [GENOMIC DNA]</scope>
</reference>
<reference key="2">
    <citation type="journal article" date="1996" name="EMBO J.">
        <title>Complete nucleotide sequence of Saccharomyces cerevisiae chromosome X.</title>
        <authorList>
            <person name="Galibert F."/>
            <person name="Alexandraki D."/>
            <person name="Baur A."/>
            <person name="Boles E."/>
            <person name="Chalwatzis N."/>
            <person name="Chuat J.-C."/>
            <person name="Coster F."/>
            <person name="Cziepluch C."/>
            <person name="de Haan M."/>
            <person name="Domdey H."/>
            <person name="Durand P."/>
            <person name="Entian K.-D."/>
            <person name="Gatius M."/>
            <person name="Goffeau A."/>
            <person name="Grivell L.A."/>
            <person name="Hennemann A."/>
            <person name="Herbert C.J."/>
            <person name="Heumann K."/>
            <person name="Hilger F."/>
            <person name="Hollenberg C.P."/>
            <person name="Huang M.-E."/>
            <person name="Jacq C."/>
            <person name="Jauniaux J.-C."/>
            <person name="Katsoulou C."/>
            <person name="Kirchrath L."/>
            <person name="Kleine K."/>
            <person name="Kordes E."/>
            <person name="Koetter P."/>
            <person name="Liebl S."/>
            <person name="Louis E.J."/>
            <person name="Manus V."/>
            <person name="Mewes H.-W."/>
            <person name="Miosga T."/>
            <person name="Obermaier B."/>
            <person name="Perea J."/>
            <person name="Pohl T.M."/>
            <person name="Portetelle D."/>
            <person name="Pujol A."/>
            <person name="Purnelle B."/>
            <person name="Ramezani Rad M."/>
            <person name="Rasmussen S.W."/>
            <person name="Rose M."/>
            <person name="Rossau R."/>
            <person name="Schaaff-Gerstenschlaeger I."/>
            <person name="Smits P.H.M."/>
            <person name="Scarcez T."/>
            <person name="Soriano N."/>
            <person name="To Van D."/>
            <person name="Tzermia M."/>
            <person name="Van Broekhoven A."/>
            <person name="Vandenbol M."/>
            <person name="Wedler H."/>
            <person name="von Wettstein D."/>
            <person name="Wambutt R."/>
            <person name="Zagulski M."/>
            <person name="Zollner A."/>
            <person name="Karpfinger-Hartl L."/>
        </authorList>
    </citation>
    <scope>NUCLEOTIDE SEQUENCE [LARGE SCALE GENOMIC DNA]</scope>
    <source>
        <strain>ATCC 204508 / S288c</strain>
    </source>
</reference>
<reference key="3">
    <citation type="journal article" date="2014" name="G3 (Bethesda)">
        <title>The reference genome sequence of Saccharomyces cerevisiae: Then and now.</title>
        <authorList>
            <person name="Engel S.R."/>
            <person name="Dietrich F.S."/>
            <person name="Fisk D.G."/>
            <person name="Binkley G."/>
            <person name="Balakrishnan R."/>
            <person name="Costanzo M.C."/>
            <person name="Dwight S.S."/>
            <person name="Hitz B.C."/>
            <person name="Karra K."/>
            <person name="Nash R.S."/>
            <person name="Weng S."/>
            <person name="Wong E.D."/>
            <person name="Lloyd P."/>
            <person name="Skrzypek M.S."/>
            <person name="Miyasato S.R."/>
            <person name="Simison M."/>
            <person name="Cherry J.M."/>
        </authorList>
    </citation>
    <scope>GENOME REANNOTATION</scope>
    <source>
        <strain>ATCC 204508 / S288c</strain>
    </source>
</reference>
<reference key="4">
    <citation type="journal article" date="1987" name="Eur. J. Biochem.">
        <title>Nucleotide sequence of the gene encoding the 11-kDa subunit of the ubiquinol-cytochrome-c oxidoreductase in Saccharomyces cerevisiae.</title>
        <authorList>
            <person name="Maarse A.C."/>
            <person name="Grivell L.A."/>
        </authorList>
    </citation>
    <scope>NUCLEOTIDE SEQUENCE [GENOMIC DNA] OF 131-352</scope>
</reference>
<reference key="5">
    <citation type="journal article" date="1993" name="Gene">
        <title>Characterization of a lysine-to-glutamic acid mutation in a conservative sequence of farnesyl diphosphate synthase from Saccharomyces cerevisiae.</title>
        <authorList>
            <person name="Blanchard L."/>
            <person name="Karst F."/>
        </authorList>
    </citation>
    <scope>FUNCTION</scope>
    <scope>CATALYTIC ACTIVITY</scope>
    <scope>MUTAGENESIS OF LYS-197</scope>
    <source>
        <strain>LB25</strain>
    </source>
</reference>
<reference key="6">
    <citation type="journal article" date="2012" name="Proc. Natl. Acad. Sci. U.S.A.">
        <title>N-terminal acetylome analyses and functional insights of the N-terminal acetyltransferase NatB.</title>
        <authorList>
            <person name="Van Damme P."/>
            <person name="Lasa M."/>
            <person name="Polevoda B."/>
            <person name="Gazquez C."/>
            <person name="Elosegui-Artola A."/>
            <person name="Kim D.S."/>
            <person name="De Juan-Pardo E."/>
            <person name="Demeyer K."/>
            <person name="Hole K."/>
            <person name="Larrea E."/>
            <person name="Timmerman E."/>
            <person name="Prieto J."/>
            <person name="Arnesen T."/>
            <person name="Sherman F."/>
            <person name="Gevaert K."/>
            <person name="Aldabe R."/>
        </authorList>
    </citation>
    <scope>IDENTIFICATION BY MASS SPECTROMETRY [LARGE SCALE ANALYSIS]</scope>
</reference>
<reference key="7">
    <citation type="journal article" date="2020" name="Genes (Basel)">
        <title>Regulation of ergosterol biosynthesis in Saccharomyces cerevisiae.</title>
        <authorList>
            <person name="Jorda T."/>
            <person name="Puig S."/>
        </authorList>
    </citation>
    <scope>REVIEW ON ERGOSTEROL BIOSYNTHESIS</scope>
</reference>
<sequence length="352" mass="40483">MASEKEIRRERFLNVFPKLVEELNASLLAYGMPKEACDWYAHSLNYNTPGGKLNRGLSVVDTYAILSNKTVEQLGQEEYEKVAILGWCIELLQAYFLVADDMMDKSITRRGQPCWYKVPEVGEIAINDAFMLEAAIYKLLKSHFRNEKYYIDITELFHEVTFQTELGQLMDLITAPEDKVDLSKFSLKKHSFIVTFKTAYYSFYLPVALAMYVAGITDEKDLKQARDVLIPLGEYFQIQDDYLDCFGTPEQIGKIGTDIQDNKCSWVINKALELASAEQRKTLDENYGKKDSVAEAKCKKIFNDLKIEQLYHEYEESIAKDLKAKISQVDESRGFKADVLTAFLNKVYKRSK</sequence>
<feature type="chain" id="PRO_0000123952" description="Farnesyl pyrophosphate synthase">
    <location>
        <begin position="1"/>
        <end position="352"/>
    </location>
</feature>
<feature type="binding site" evidence="1">
    <location>
        <position position="52"/>
    </location>
    <ligand>
        <name>isopentenyl diphosphate</name>
        <dbReference type="ChEBI" id="CHEBI:128769"/>
    </ligand>
</feature>
<feature type="binding site" evidence="1">
    <location>
        <position position="55"/>
    </location>
    <ligand>
        <name>isopentenyl diphosphate</name>
        <dbReference type="ChEBI" id="CHEBI:128769"/>
    </ligand>
</feature>
<feature type="binding site" evidence="1">
    <location>
        <position position="93"/>
    </location>
    <ligand>
        <name>isopentenyl diphosphate</name>
        <dbReference type="ChEBI" id="CHEBI:128769"/>
    </ligand>
</feature>
<feature type="binding site" evidence="1">
    <location>
        <position position="100"/>
    </location>
    <ligand>
        <name>Mg(2+)</name>
        <dbReference type="ChEBI" id="CHEBI:18420"/>
        <label>1</label>
    </ligand>
</feature>
<feature type="binding site" evidence="1">
    <location>
        <position position="100"/>
    </location>
    <ligand>
        <name>Mg(2+)</name>
        <dbReference type="ChEBI" id="CHEBI:18420"/>
        <label>2</label>
    </ligand>
</feature>
<feature type="binding site" evidence="1">
    <location>
        <position position="104"/>
    </location>
    <ligand>
        <name>Mg(2+)</name>
        <dbReference type="ChEBI" id="CHEBI:18420"/>
        <label>1</label>
    </ligand>
</feature>
<feature type="binding site" evidence="1">
    <location>
        <position position="104"/>
    </location>
    <ligand>
        <name>Mg(2+)</name>
        <dbReference type="ChEBI" id="CHEBI:18420"/>
        <label>2</label>
    </ligand>
</feature>
<feature type="binding site" evidence="1">
    <location>
        <position position="109"/>
    </location>
    <ligand>
        <name>dimethylallyl diphosphate</name>
        <dbReference type="ChEBI" id="CHEBI:57623"/>
    </ligand>
</feature>
<feature type="binding site" evidence="1">
    <location>
        <position position="110"/>
    </location>
    <ligand>
        <name>isopentenyl diphosphate</name>
        <dbReference type="ChEBI" id="CHEBI:128769"/>
    </ligand>
</feature>
<feature type="binding site" evidence="1">
    <location>
        <position position="197"/>
    </location>
    <ligand>
        <name>dimethylallyl diphosphate</name>
        <dbReference type="ChEBI" id="CHEBI:57623"/>
    </ligand>
</feature>
<feature type="binding site" evidence="1">
    <location>
        <position position="198"/>
    </location>
    <ligand>
        <name>dimethylallyl diphosphate</name>
        <dbReference type="ChEBI" id="CHEBI:57623"/>
    </ligand>
</feature>
<feature type="binding site" evidence="1">
    <location>
        <position position="237"/>
    </location>
    <ligand>
        <name>dimethylallyl diphosphate</name>
        <dbReference type="ChEBI" id="CHEBI:57623"/>
    </ligand>
</feature>
<feature type="binding site" evidence="1">
    <location>
        <position position="254"/>
    </location>
    <ligand>
        <name>dimethylallyl diphosphate</name>
        <dbReference type="ChEBI" id="CHEBI:57623"/>
    </ligand>
</feature>
<feature type="binding site" evidence="1">
    <location>
        <position position="263"/>
    </location>
    <ligand>
        <name>dimethylallyl diphosphate</name>
        <dbReference type="ChEBI" id="CHEBI:57623"/>
    </ligand>
</feature>
<feature type="mutagenesis site" description="In ERG20-2; 14-fold decrease in FPPS activity." evidence="2">
    <original>K</original>
    <variation>E</variation>
    <location>
        <position position="197"/>
    </location>
</feature>
<proteinExistence type="evidence at protein level"/>
<accession>P08524</accession>
<accession>D6VW20</accession>
<accession>P15495</accession>
<dbReference type="EC" id="2.5.1.10" evidence="2"/>
<dbReference type="EC" id="2.5.1.1" evidence="2"/>
<dbReference type="EMBL" id="J05091">
    <property type="protein sequence ID" value="AAA34606.1"/>
    <property type="molecule type" value="Genomic_DNA"/>
</dbReference>
<dbReference type="EMBL" id="Z49442">
    <property type="protein sequence ID" value="CAA89462.1"/>
    <property type="molecule type" value="Genomic_DNA"/>
</dbReference>
<dbReference type="EMBL" id="X05550">
    <property type="protein sequence ID" value="CAA29064.1"/>
    <property type="molecule type" value="Genomic_DNA"/>
</dbReference>
<dbReference type="EMBL" id="BK006943">
    <property type="protein sequence ID" value="DAA08636.1"/>
    <property type="molecule type" value="Genomic_DNA"/>
</dbReference>
<dbReference type="PIR" id="A34441">
    <property type="entry name" value="A34441"/>
</dbReference>
<dbReference type="RefSeq" id="NP_012368.1">
    <property type="nucleotide sequence ID" value="NM_001181600.1"/>
</dbReference>
<dbReference type="SMR" id="P08524"/>
<dbReference type="BioGRID" id="33592">
    <property type="interactions" value="72"/>
</dbReference>
<dbReference type="DIP" id="DIP-1163N"/>
<dbReference type="FunCoup" id="P08524">
    <property type="interactions" value="1027"/>
</dbReference>
<dbReference type="IntAct" id="P08524">
    <property type="interactions" value="10"/>
</dbReference>
<dbReference type="STRING" id="4932.YJL167W"/>
<dbReference type="iPTMnet" id="P08524"/>
<dbReference type="PaxDb" id="4932-YJL167W"/>
<dbReference type="PeptideAtlas" id="P08524"/>
<dbReference type="EnsemblFungi" id="YJL167W_mRNA">
    <property type="protein sequence ID" value="YJL167W"/>
    <property type="gene ID" value="YJL167W"/>
</dbReference>
<dbReference type="GeneID" id="853272"/>
<dbReference type="KEGG" id="sce:YJL167W"/>
<dbReference type="AGR" id="SGD:S000003703"/>
<dbReference type="SGD" id="S000003703">
    <property type="gene designation" value="ERG20"/>
</dbReference>
<dbReference type="VEuPathDB" id="FungiDB:YJL167W"/>
<dbReference type="eggNOG" id="KOG0711">
    <property type="taxonomic scope" value="Eukaryota"/>
</dbReference>
<dbReference type="GeneTree" id="ENSGT00900000141074"/>
<dbReference type="HOGENOM" id="CLU_028376_1_0_1"/>
<dbReference type="InParanoid" id="P08524"/>
<dbReference type="OMA" id="CSWVVNQ"/>
<dbReference type="OrthoDB" id="10257492at2759"/>
<dbReference type="BioCyc" id="MetaCyc:MONOMER-655"/>
<dbReference type="BioCyc" id="YEAST:MONOMER-655"/>
<dbReference type="BRENDA" id="2.5.1.10">
    <property type="organism ID" value="984"/>
</dbReference>
<dbReference type="Reactome" id="R-SCE-191273">
    <property type="pathway name" value="Cholesterol biosynthesis"/>
</dbReference>
<dbReference type="UniPathway" id="UPA00259">
    <property type="reaction ID" value="UER00368"/>
</dbReference>
<dbReference type="UniPathway" id="UPA00260">
    <property type="reaction ID" value="UER00369"/>
</dbReference>
<dbReference type="BioGRID-ORCS" id="853272">
    <property type="hits" value="9 hits in 10 CRISPR screens"/>
</dbReference>
<dbReference type="CD-CODE" id="E03F929F">
    <property type="entry name" value="Stress granule"/>
</dbReference>
<dbReference type="PRO" id="PR:P08524"/>
<dbReference type="Proteomes" id="UP000002311">
    <property type="component" value="Chromosome X"/>
</dbReference>
<dbReference type="RNAct" id="P08524">
    <property type="molecule type" value="protein"/>
</dbReference>
<dbReference type="GO" id="GO:0005737">
    <property type="term" value="C:cytoplasm"/>
    <property type="evidence" value="ECO:0000314"/>
    <property type="project" value="SGD"/>
</dbReference>
<dbReference type="GO" id="GO:0005783">
    <property type="term" value="C:endoplasmic reticulum"/>
    <property type="evidence" value="ECO:0000314"/>
    <property type="project" value="SGD"/>
</dbReference>
<dbReference type="GO" id="GO:0005773">
    <property type="term" value="C:vacuole"/>
    <property type="evidence" value="ECO:0000303"/>
    <property type="project" value="UniProt"/>
</dbReference>
<dbReference type="GO" id="GO:0004337">
    <property type="term" value="F:(2E,6E)-farnesyl diphosphate synthase activity"/>
    <property type="evidence" value="ECO:0000314"/>
    <property type="project" value="SGD"/>
</dbReference>
<dbReference type="GO" id="GO:0004161">
    <property type="term" value="F:dimethylallyltranstransferase activity"/>
    <property type="evidence" value="ECO:0000314"/>
    <property type="project" value="SGD"/>
</dbReference>
<dbReference type="GO" id="GO:0004452">
    <property type="term" value="F:isopentenyl-diphosphate delta-isomerase activity"/>
    <property type="evidence" value="ECO:0000314"/>
    <property type="project" value="UniProt"/>
</dbReference>
<dbReference type="GO" id="GO:0046872">
    <property type="term" value="F:metal ion binding"/>
    <property type="evidence" value="ECO:0007669"/>
    <property type="project" value="UniProtKB-KW"/>
</dbReference>
<dbReference type="GO" id="GO:0006696">
    <property type="term" value="P:ergosterol biosynthetic process"/>
    <property type="evidence" value="ECO:0000314"/>
    <property type="project" value="UniProt"/>
</dbReference>
<dbReference type="GO" id="GO:0045337">
    <property type="term" value="P:farnesyl diphosphate biosynthetic process"/>
    <property type="evidence" value="ECO:0000314"/>
    <property type="project" value="SGD"/>
</dbReference>
<dbReference type="GO" id="GO:0033384">
    <property type="term" value="P:geranyl diphosphate biosynthetic process"/>
    <property type="evidence" value="ECO:0007669"/>
    <property type="project" value="UniProtKB-UniPathway"/>
</dbReference>
<dbReference type="GO" id="GO:0008299">
    <property type="term" value="P:isoprenoid biosynthetic process"/>
    <property type="evidence" value="ECO:0000314"/>
    <property type="project" value="SGD"/>
</dbReference>
<dbReference type="CDD" id="cd00685">
    <property type="entry name" value="Trans_IPPS_HT"/>
    <property type="match status" value="1"/>
</dbReference>
<dbReference type="FunFam" id="1.10.600.10:FF:000006">
    <property type="entry name" value="Farnesyl pyrophosphate synthase"/>
    <property type="match status" value="1"/>
</dbReference>
<dbReference type="Gene3D" id="1.10.600.10">
    <property type="entry name" value="Farnesyl Diphosphate Synthase"/>
    <property type="match status" value="1"/>
</dbReference>
<dbReference type="InterPro" id="IPR039702">
    <property type="entry name" value="FPS1-like"/>
</dbReference>
<dbReference type="InterPro" id="IPR008949">
    <property type="entry name" value="Isoprenoid_synthase_dom_sf"/>
</dbReference>
<dbReference type="InterPro" id="IPR000092">
    <property type="entry name" value="Polyprenyl_synt"/>
</dbReference>
<dbReference type="InterPro" id="IPR033749">
    <property type="entry name" value="Polyprenyl_synt_CS"/>
</dbReference>
<dbReference type="PANTHER" id="PTHR11525:SF0">
    <property type="entry name" value="FARNESYL PYROPHOSPHATE SYNTHASE"/>
    <property type="match status" value="1"/>
</dbReference>
<dbReference type="PANTHER" id="PTHR11525">
    <property type="entry name" value="FARNESYL-PYROPHOSPHATE SYNTHETASE"/>
    <property type="match status" value="1"/>
</dbReference>
<dbReference type="Pfam" id="PF00348">
    <property type="entry name" value="polyprenyl_synt"/>
    <property type="match status" value="1"/>
</dbReference>
<dbReference type="SFLD" id="SFLDS00005">
    <property type="entry name" value="Isoprenoid_Synthase_Type_I"/>
    <property type="match status" value="1"/>
</dbReference>
<dbReference type="SFLD" id="SFLDG01017">
    <property type="entry name" value="Polyprenyl_Transferase_Like"/>
    <property type="match status" value="1"/>
</dbReference>
<dbReference type="SUPFAM" id="SSF48576">
    <property type="entry name" value="Terpenoid synthases"/>
    <property type="match status" value="1"/>
</dbReference>
<dbReference type="PROSITE" id="PS00723">
    <property type="entry name" value="POLYPRENYL_SYNTHASE_1"/>
    <property type="match status" value="1"/>
</dbReference>
<dbReference type="PROSITE" id="PS00444">
    <property type="entry name" value="POLYPRENYL_SYNTHASE_2"/>
    <property type="match status" value="1"/>
</dbReference>
<keyword id="KW-0414">Isoprene biosynthesis</keyword>
<keyword id="KW-0444">Lipid biosynthesis</keyword>
<keyword id="KW-0443">Lipid metabolism</keyword>
<keyword id="KW-0460">Magnesium</keyword>
<keyword id="KW-0479">Metal-binding</keyword>
<keyword id="KW-1185">Reference proteome</keyword>
<keyword id="KW-0808">Transferase</keyword>